<reference key="1">
    <citation type="submission" date="2006-01" db="EMBL/GenBank/DDBJ databases">
        <title>Complete sequence of Anaeromyxobacter dehalogenans 2CP-C.</title>
        <authorList>
            <person name="Copeland A."/>
            <person name="Lucas S."/>
            <person name="Lapidus A."/>
            <person name="Barry K."/>
            <person name="Detter J.C."/>
            <person name="Glavina T."/>
            <person name="Hammon N."/>
            <person name="Israni S."/>
            <person name="Pitluck S."/>
            <person name="Brettin T."/>
            <person name="Bruce D."/>
            <person name="Han C."/>
            <person name="Tapia R."/>
            <person name="Gilna P."/>
            <person name="Kiss H."/>
            <person name="Schmutz J."/>
            <person name="Larimer F."/>
            <person name="Land M."/>
            <person name="Kyrpides N."/>
            <person name="Anderson I."/>
            <person name="Sanford R.A."/>
            <person name="Ritalahti K.M."/>
            <person name="Thomas H.S."/>
            <person name="Kirby J.R."/>
            <person name="Zhulin I.B."/>
            <person name="Loeffler F.E."/>
            <person name="Richardson P."/>
        </authorList>
    </citation>
    <scope>NUCLEOTIDE SEQUENCE [LARGE SCALE GENOMIC DNA]</scope>
    <source>
        <strain>2CP-C</strain>
    </source>
</reference>
<sequence>MIVRLTSEHPDGARAARRLRARAAAFLAALGREDAELSILLVTDRRIRTLNREWRQKDQATDVLSFPISEPPGAGALLGDVVISLDTAARRARSDGRRVGAELDRYLAHGILHLLGYDHERPADARAMAEKEAELARAEGLVGAALREGRREGRAGEAKDRWTRSPTSISTPSRSGSTARGSRAKTSRAGSRT</sequence>
<protein>
    <recommendedName>
        <fullName evidence="1">Endoribonuclease YbeY</fullName>
        <ecNumber evidence="1">3.1.-.-</ecNumber>
    </recommendedName>
</protein>
<dbReference type="EC" id="3.1.-.-" evidence="1"/>
<dbReference type="EMBL" id="CP000251">
    <property type="protein sequence ID" value="ABC82489.1"/>
    <property type="molecule type" value="Genomic_DNA"/>
</dbReference>
<dbReference type="RefSeq" id="WP_011421771.1">
    <property type="nucleotide sequence ID" value="NC_007760.1"/>
</dbReference>
<dbReference type="SMR" id="Q2ILG1"/>
<dbReference type="STRING" id="290397.Adeh_2719"/>
<dbReference type="KEGG" id="ade:Adeh_2719"/>
<dbReference type="eggNOG" id="COG0319">
    <property type="taxonomic scope" value="Bacteria"/>
</dbReference>
<dbReference type="HOGENOM" id="CLU_1412589_0_0_7"/>
<dbReference type="OrthoDB" id="9807740at2"/>
<dbReference type="Proteomes" id="UP000001935">
    <property type="component" value="Chromosome"/>
</dbReference>
<dbReference type="GO" id="GO:0005737">
    <property type="term" value="C:cytoplasm"/>
    <property type="evidence" value="ECO:0007669"/>
    <property type="project" value="UniProtKB-SubCell"/>
</dbReference>
<dbReference type="GO" id="GO:0004222">
    <property type="term" value="F:metalloendopeptidase activity"/>
    <property type="evidence" value="ECO:0007669"/>
    <property type="project" value="InterPro"/>
</dbReference>
<dbReference type="GO" id="GO:0004521">
    <property type="term" value="F:RNA endonuclease activity"/>
    <property type="evidence" value="ECO:0007669"/>
    <property type="project" value="UniProtKB-UniRule"/>
</dbReference>
<dbReference type="GO" id="GO:0008270">
    <property type="term" value="F:zinc ion binding"/>
    <property type="evidence" value="ECO:0007669"/>
    <property type="project" value="UniProtKB-UniRule"/>
</dbReference>
<dbReference type="GO" id="GO:0006364">
    <property type="term" value="P:rRNA processing"/>
    <property type="evidence" value="ECO:0007669"/>
    <property type="project" value="UniProtKB-UniRule"/>
</dbReference>
<dbReference type="Gene3D" id="3.40.390.30">
    <property type="entry name" value="Metalloproteases ('zincins'), catalytic domain"/>
    <property type="match status" value="1"/>
</dbReference>
<dbReference type="HAMAP" id="MF_00009">
    <property type="entry name" value="Endoribonucl_YbeY"/>
    <property type="match status" value="1"/>
</dbReference>
<dbReference type="InterPro" id="IPR023091">
    <property type="entry name" value="MetalPrtase_cat_dom_sf_prd"/>
</dbReference>
<dbReference type="InterPro" id="IPR002036">
    <property type="entry name" value="YbeY"/>
</dbReference>
<dbReference type="InterPro" id="IPR020549">
    <property type="entry name" value="YbeY_CS"/>
</dbReference>
<dbReference type="NCBIfam" id="TIGR00043">
    <property type="entry name" value="rRNA maturation RNase YbeY"/>
    <property type="match status" value="1"/>
</dbReference>
<dbReference type="PANTHER" id="PTHR46986">
    <property type="entry name" value="ENDORIBONUCLEASE YBEY, CHLOROPLASTIC"/>
    <property type="match status" value="1"/>
</dbReference>
<dbReference type="PANTHER" id="PTHR46986:SF1">
    <property type="entry name" value="ENDORIBONUCLEASE YBEY, CHLOROPLASTIC"/>
    <property type="match status" value="1"/>
</dbReference>
<dbReference type="Pfam" id="PF02130">
    <property type="entry name" value="YbeY"/>
    <property type="match status" value="1"/>
</dbReference>
<dbReference type="SUPFAM" id="SSF55486">
    <property type="entry name" value="Metalloproteases ('zincins'), catalytic domain"/>
    <property type="match status" value="1"/>
</dbReference>
<dbReference type="PROSITE" id="PS01306">
    <property type="entry name" value="UPF0054"/>
    <property type="match status" value="1"/>
</dbReference>
<evidence type="ECO:0000255" key="1">
    <source>
        <dbReference type="HAMAP-Rule" id="MF_00009"/>
    </source>
</evidence>
<evidence type="ECO:0000256" key="2">
    <source>
        <dbReference type="SAM" id="MobiDB-lite"/>
    </source>
</evidence>
<name>YBEY_ANADE</name>
<gene>
    <name evidence="1" type="primary">ybeY</name>
    <name type="ordered locus">Adeh_2719</name>
</gene>
<proteinExistence type="inferred from homology"/>
<keyword id="KW-0963">Cytoplasm</keyword>
<keyword id="KW-0255">Endonuclease</keyword>
<keyword id="KW-0378">Hydrolase</keyword>
<keyword id="KW-0479">Metal-binding</keyword>
<keyword id="KW-0540">Nuclease</keyword>
<keyword id="KW-1185">Reference proteome</keyword>
<keyword id="KW-0690">Ribosome biogenesis</keyword>
<keyword id="KW-0698">rRNA processing</keyword>
<keyword id="KW-0862">Zinc</keyword>
<feature type="chain" id="PRO_0000284156" description="Endoribonuclease YbeY">
    <location>
        <begin position="1"/>
        <end position="193"/>
    </location>
</feature>
<feature type="region of interest" description="Disordered" evidence="2">
    <location>
        <begin position="143"/>
        <end position="193"/>
    </location>
</feature>
<feature type="compositionally biased region" description="Basic and acidic residues" evidence="2">
    <location>
        <begin position="147"/>
        <end position="163"/>
    </location>
</feature>
<feature type="compositionally biased region" description="Low complexity" evidence="2">
    <location>
        <begin position="164"/>
        <end position="181"/>
    </location>
</feature>
<feature type="binding site" evidence="1">
    <location>
        <position position="109"/>
    </location>
    <ligand>
        <name>Zn(2+)</name>
        <dbReference type="ChEBI" id="CHEBI:29105"/>
        <note>catalytic</note>
    </ligand>
</feature>
<feature type="binding site" evidence="1">
    <location>
        <position position="113"/>
    </location>
    <ligand>
        <name>Zn(2+)</name>
        <dbReference type="ChEBI" id="CHEBI:29105"/>
        <note>catalytic</note>
    </ligand>
</feature>
<feature type="binding site" evidence="1">
    <location>
        <position position="119"/>
    </location>
    <ligand>
        <name>Zn(2+)</name>
        <dbReference type="ChEBI" id="CHEBI:29105"/>
        <note>catalytic</note>
    </ligand>
</feature>
<comment type="function">
    <text evidence="1">Single strand-specific metallo-endoribonuclease involved in late-stage 70S ribosome quality control and in maturation of the 3' terminus of the 16S rRNA.</text>
</comment>
<comment type="cofactor">
    <cofactor evidence="1">
        <name>Zn(2+)</name>
        <dbReference type="ChEBI" id="CHEBI:29105"/>
    </cofactor>
    <text evidence="1">Binds 1 zinc ion.</text>
</comment>
<comment type="subcellular location">
    <subcellularLocation>
        <location evidence="1">Cytoplasm</location>
    </subcellularLocation>
</comment>
<comment type="similarity">
    <text evidence="1">Belongs to the endoribonuclease YbeY family.</text>
</comment>
<organism>
    <name type="scientific">Anaeromyxobacter dehalogenans (strain 2CP-C)</name>
    <dbReference type="NCBI Taxonomy" id="290397"/>
    <lineage>
        <taxon>Bacteria</taxon>
        <taxon>Pseudomonadati</taxon>
        <taxon>Myxococcota</taxon>
        <taxon>Myxococcia</taxon>
        <taxon>Myxococcales</taxon>
        <taxon>Cystobacterineae</taxon>
        <taxon>Anaeromyxobacteraceae</taxon>
        <taxon>Anaeromyxobacter</taxon>
    </lineage>
</organism>
<accession>Q2ILG1</accession>